<proteinExistence type="inferred from homology"/>
<reference key="1">
    <citation type="journal article" date="2005" name="Jpn. Agric. Res. Q.">
        <title>Genome sequence of Xanthomonas oryzae pv. oryzae suggests contribution of large numbers of effector genes and insertion sequences to its race diversity.</title>
        <authorList>
            <person name="Ochiai H."/>
            <person name="Inoue Y."/>
            <person name="Takeya M."/>
            <person name="Sasaki A."/>
            <person name="Kaku H."/>
        </authorList>
    </citation>
    <scope>NUCLEOTIDE SEQUENCE [LARGE SCALE GENOMIC DNA]</scope>
    <source>
        <strain>MAFF 311018</strain>
    </source>
</reference>
<keyword id="KW-0227">DNA damage</keyword>
<keyword id="KW-0234">DNA repair</keyword>
<keyword id="KW-0235">DNA replication</keyword>
<keyword id="KW-0436">Ligase</keyword>
<keyword id="KW-0460">Magnesium</keyword>
<keyword id="KW-0464">Manganese</keyword>
<keyword id="KW-0479">Metal-binding</keyword>
<keyword id="KW-0520">NAD</keyword>
<keyword id="KW-0862">Zinc</keyword>
<name>DNLJ_XANOM</name>
<accession>Q2P334</accession>
<feature type="chain" id="PRO_0000313519" description="DNA ligase">
    <location>
        <begin position="1"/>
        <end position="841"/>
    </location>
</feature>
<feature type="domain" description="BRCT" evidence="1">
    <location>
        <begin position="758"/>
        <end position="841"/>
    </location>
</feature>
<feature type="active site" description="N6-AMP-lysine intermediate" evidence="1">
    <location>
        <position position="116"/>
    </location>
</feature>
<feature type="binding site" evidence="1">
    <location>
        <begin position="33"/>
        <end position="37"/>
    </location>
    <ligand>
        <name>NAD(+)</name>
        <dbReference type="ChEBI" id="CHEBI:57540"/>
    </ligand>
</feature>
<feature type="binding site" evidence="1">
    <location>
        <begin position="82"/>
        <end position="83"/>
    </location>
    <ligand>
        <name>NAD(+)</name>
        <dbReference type="ChEBI" id="CHEBI:57540"/>
    </ligand>
</feature>
<feature type="binding site" evidence="1">
    <location>
        <position position="114"/>
    </location>
    <ligand>
        <name>NAD(+)</name>
        <dbReference type="ChEBI" id="CHEBI:57540"/>
    </ligand>
</feature>
<feature type="binding site" evidence="1">
    <location>
        <position position="137"/>
    </location>
    <ligand>
        <name>NAD(+)</name>
        <dbReference type="ChEBI" id="CHEBI:57540"/>
    </ligand>
</feature>
<feature type="binding site" evidence="1">
    <location>
        <position position="174"/>
    </location>
    <ligand>
        <name>NAD(+)</name>
        <dbReference type="ChEBI" id="CHEBI:57540"/>
    </ligand>
</feature>
<feature type="binding site" evidence="1">
    <location>
        <position position="300"/>
    </location>
    <ligand>
        <name>NAD(+)</name>
        <dbReference type="ChEBI" id="CHEBI:57540"/>
    </ligand>
</feature>
<feature type="binding site" evidence="1">
    <location>
        <position position="324"/>
    </location>
    <ligand>
        <name>NAD(+)</name>
        <dbReference type="ChEBI" id="CHEBI:57540"/>
    </ligand>
</feature>
<feature type="binding site" evidence="1">
    <location>
        <position position="418"/>
    </location>
    <ligand>
        <name>Zn(2+)</name>
        <dbReference type="ChEBI" id="CHEBI:29105"/>
    </ligand>
</feature>
<feature type="binding site" evidence="1">
    <location>
        <position position="421"/>
    </location>
    <ligand>
        <name>Zn(2+)</name>
        <dbReference type="ChEBI" id="CHEBI:29105"/>
    </ligand>
</feature>
<feature type="binding site" evidence="1">
    <location>
        <position position="436"/>
    </location>
    <ligand>
        <name>Zn(2+)</name>
        <dbReference type="ChEBI" id="CHEBI:29105"/>
    </ligand>
</feature>
<feature type="binding site" evidence="1">
    <location>
        <position position="442"/>
    </location>
    <ligand>
        <name>Zn(2+)</name>
        <dbReference type="ChEBI" id="CHEBI:29105"/>
    </ligand>
</feature>
<evidence type="ECO:0000255" key="1">
    <source>
        <dbReference type="HAMAP-Rule" id="MF_01588"/>
    </source>
</evidence>
<sequence>MEQGVIERARELRRRIENADHRYYDLADPEITDAQYDQLFRELQELEQKYPELVTADSPSMRVGGAVRKSFVKVRHSIPMLSLANAFDEVEVKNFVDRIFRRMGSSNPLEFSVEPKFDGLAISLRYELGKFVQGVTRGDGDVGEDVSENIRTIRSVPLKLKGNNVPAILEVRGEVYMPRDGFSEFNKRAMARGEKLLANPRNGAAGSLRQLDSRISAQRPLSFFAYGVGLIQVEQDLFEEIPQSIASTHSAMLAQLRAWGFPVSSLVEVVQGSDGLLAYYQRIGEARDGLPFDIDGVVYKLDDLAGQREMGFVSRAPRWALAHKFPAQEQSTTVEAIEIQIGRTGAATPVARLKPVHVAGVIVTNATLHNADQIARLDVRVGDTVIVRRAGDVIPEVAAVVADQRPPATQSWQMPTQCPVCGSEIVREEGQAVWRCSGELTCPAQRKEAFRHFVSRRAMDVDGLGEKFIEVLVDSGVVQGVADLYLLTVDQLLQLRMISTAESPHAFLREAREHLASGAYAQLEATLVGIGVDLAGEREVPQTWQADLLRAGLPTFDWNRKKIATKWAENLIEAIETSRDTTLERFLFALGIEHVGESTAKALSAWFGDLDLIRHLPWPLFKRVPDIGGEVARSLGHFFDQPGNQKAIDHLLARKVRIGDTHPPSPKLRGELRLANLLEDLEIPKVTPIRAAQIATAFGSIDALRNGGPEPLVEAGVPQSVAESLATWLLVPANDTLAVNAQKKLSALLAMMPEAGEEKTGPLDGQTVVITGTLAALTRDAAKQRLEALGAKVAGSVSKKTAFLVAGEEAGSKLDKAQSLGVEIWDEARLLAFLGEHGQQR</sequence>
<gene>
    <name evidence="1" type="primary">ligA</name>
    <name type="ordered locus">XOO2288</name>
</gene>
<dbReference type="EC" id="6.5.1.2" evidence="1"/>
<dbReference type="EMBL" id="AP008229">
    <property type="protein sequence ID" value="BAE69043.1"/>
    <property type="molecule type" value="Genomic_DNA"/>
</dbReference>
<dbReference type="RefSeq" id="WP_011408594.1">
    <property type="nucleotide sequence ID" value="NC_007705.1"/>
</dbReference>
<dbReference type="SMR" id="Q2P334"/>
<dbReference type="KEGG" id="xom:XOO2288"/>
<dbReference type="HOGENOM" id="CLU_007764_2_0_6"/>
<dbReference type="GO" id="GO:0005829">
    <property type="term" value="C:cytosol"/>
    <property type="evidence" value="ECO:0007669"/>
    <property type="project" value="TreeGrafter"/>
</dbReference>
<dbReference type="GO" id="GO:0003911">
    <property type="term" value="F:DNA ligase (NAD+) activity"/>
    <property type="evidence" value="ECO:0007669"/>
    <property type="project" value="UniProtKB-UniRule"/>
</dbReference>
<dbReference type="GO" id="GO:0046872">
    <property type="term" value="F:metal ion binding"/>
    <property type="evidence" value="ECO:0007669"/>
    <property type="project" value="UniProtKB-KW"/>
</dbReference>
<dbReference type="GO" id="GO:0006281">
    <property type="term" value="P:DNA repair"/>
    <property type="evidence" value="ECO:0007669"/>
    <property type="project" value="UniProtKB-KW"/>
</dbReference>
<dbReference type="GO" id="GO:0006260">
    <property type="term" value="P:DNA replication"/>
    <property type="evidence" value="ECO:0007669"/>
    <property type="project" value="UniProtKB-KW"/>
</dbReference>
<dbReference type="CDD" id="cd17748">
    <property type="entry name" value="BRCT_DNA_ligase_like"/>
    <property type="match status" value="1"/>
</dbReference>
<dbReference type="CDD" id="cd00114">
    <property type="entry name" value="LIGANc"/>
    <property type="match status" value="1"/>
</dbReference>
<dbReference type="FunFam" id="1.10.150.20:FF:000006">
    <property type="entry name" value="DNA ligase"/>
    <property type="match status" value="1"/>
</dbReference>
<dbReference type="FunFam" id="1.10.150.20:FF:000007">
    <property type="entry name" value="DNA ligase"/>
    <property type="match status" value="1"/>
</dbReference>
<dbReference type="FunFam" id="2.40.50.140:FF:000012">
    <property type="entry name" value="DNA ligase"/>
    <property type="match status" value="1"/>
</dbReference>
<dbReference type="FunFam" id="3.30.470.30:FF:000001">
    <property type="entry name" value="DNA ligase"/>
    <property type="match status" value="1"/>
</dbReference>
<dbReference type="FunFam" id="3.40.50.10190:FF:000054">
    <property type="entry name" value="DNA ligase"/>
    <property type="match status" value="1"/>
</dbReference>
<dbReference type="Gene3D" id="6.20.10.30">
    <property type="match status" value="1"/>
</dbReference>
<dbReference type="Gene3D" id="1.10.150.20">
    <property type="entry name" value="5' to 3' exonuclease, C-terminal subdomain"/>
    <property type="match status" value="3"/>
</dbReference>
<dbReference type="Gene3D" id="3.40.50.10190">
    <property type="entry name" value="BRCT domain"/>
    <property type="match status" value="1"/>
</dbReference>
<dbReference type="Gene3D" id="3.30.470.30">
    <property type="entry name" value="DNA ligase/mRNA capping enzyme"/>
    <property type="match status" value="1"/>
</dbReference>
<dbReference type="Gene3D" id="1.10.287.610">
    <property type="entry name" value="Helix hairpin bin"/>
    <property type="match status" value="1"/>
</dbReference>
<dbReference type="Gene3D" id="2.40.50.140">
    <property type="entry name" value="Nucleic acid-binding proteins"/>
    <property type="match status" value="1"/>
</dbReference>
<dbReference type="HAMAP" id="MF_01588">
    <property type="entry name" value="DNA_ligase_A"/>
    <property type="match status" value="1"/>
</dbReference>
<dbReference type="InterPro" id="IPR001357">
    <property type="entry name" value="BRCT_dom"/>
</dbReference>
<dbReference type="InterPro" id="IPR036420">
    <property type="entry name" value="BRCT_dom_sf"/>
</dbReference>
<dbReference type="InterPro" id="IPR041663">
    <property type="entry name" value="DisA/LigA_HHH"/>
</dbReference>
<dbReference type="InterPro" id="IPR001679">
    <property type="entry name" value="DNA_ligase"/>
</dbReference>
<dbReference type="InterPro" id="IPR018239">
    <property type="entry name" value="DNA_ligase_AS"/>
</dbReference>
<dbReference type="InterPro" id="IPR013839">
    <property type="entry name" value="DNAligase_adenylation"/>
</dbReference>
<dbReference type="InterPro" id="IPR013840">
    <property type="entry name" value="DNAligase_N"/>
</dbReference>
<dbReference type="InterPro" id="IPR012340">
    <property type="entry name" value="NA-bd_OB-fold"/>
</dbReference>
<dbReference type="InterPro" id="IPR004150">
    <property type="entry name" value="NAD_DNA_ligase_OB"/>
</dbReference>
<dbReference type="InterPro" id="IPR010994">
    <property type="entry name" value="RuvA_2-like"/>
</dbReference>
<dbReference type="InterPro" id="IPR004149">
    <property type="entry name" value="Znf_DNAligase_C4"/>
</dbReference>
<dbReference type="NCBIfam" id="TIGR00575">
    <property type="entry name" value="dnlj"/>
    <property type="match status" value="1"/>
</dbReference>
<dbReference type="NCBIfam" id="NF005932">
    <property type="entry name" value="PRK07956.1"/>
    <property type="match status" value="1"/>
</dbReference>
<dbReference type="PANTHER" id="PTHR23389">
    <property type="entry name" value="CHROMOSOME TRANSMISSION FIDELITY FACTOR 18"/>
    <property type="match status" value="1"/>
</dbReference>
<dbReference type="PANTHER" id="PTHR23389:SF9">
    <property type="entry name" value="DNA LIGASE"/>
    <property type="match status" value="1"/>
</dbReference>
<dbReference type="Pfam" id="PF00533">
    <property type="entry name" value="BRCT"/>
    <property type="match status" value="1"/>
</dbReference>
<dbReference type="Pfam" id="PF01653">
    <property type="entry name" value="DNA_ligase_aden"/>
    <property type="match status" value="1"/>
</dbReference>
<dbReference type="Pfam" id="PF03120">
    <property type="entry name" value="DNA_ligase_OB"/>
    <property type="match status" value="1"/>
</dbReference>
<dbReference type="Pfam" id="PF03119">
    <property type="entry name" value="DNA_ligase_ZBD"/>
    <property type="match status" value="1"/>
</dbReference>
<dbReference type="Pfam" id="PF12826">
    <property type="entry name" value="HHH_2"/>
    <property type="match status" value="1"/>
</dbReference>
<dbReference type="Pfam" id="PF22745">
    <property type="entry name" value="Nlig-Ia"/>
    <property type="match status" value="1"/>
</dbReference>
<dbReference type="SMART" id="SM00292">
    <property type="entry name" value="BRCT"/>
    <property type="match status" value="1"/>
</dbReference>
<dbReference type="SMART" id="SM00532">
    <property type="entry name" value="LIGANc"/>
    <property type="match status" value="1"/>
</dbReference>
<dbReference type="SUPFAM" id="SSF52113">
    <property type="entry name" value="BRCT domain"/>
    <property type="match status" value="1"/>
</dbReference>
<dbReference type="SUPFAM" id="SSF56091">
    <property type="entry name" value="DNA ligase/mRNA capping enzyme, catalytic domain"/>
    <property type="match status" value="1"/>
</dbReference>
<dbReference type="SUPFAM" id="SSF50249">
    <property type="entry name" value="Nucleic acid-binding proteins"/>
    <property type="match status" value="1"/>
</dbReference>
<dbReference type="SUPFAM" id="SSF47781">
    <property type="entry name" value="RuvA domain 2-like"/>
    <property type="match status" value="2"/>
</dbReference>
<dbReference type="PROSITE" id="PS50172">
    <property type="entry name" value="BRCT"/>
    <property type="match status" value="1"/>
</dbReference>
<dbReference type="PROSITE" id="PS01055">
    <property type="entry name" value="DNA_LIGASE_N1"/>
    <property type="match status" value="1"/>
</dbReference>
<protein>
    <recommendedName>
        <fullName evidence="1">DNA ligase</fullName>
        <ecNumber evidence="1">6.5.1.2</ecNumber>
    </recommendedName>
    <alternativeName>
        <fullName evidence="1">Polydeoxyribonucleotide synthase [NAD(+)]</fullName>
    </alternativeName>
</protein>
<comment type="function">
    <text evidence="1">DNA ligase that catalyzes the formation of phosphodiester linkages between 5'-phosphoryl and 3'-hydroxyl groups in double-stranded DNA using NAD as a coenzyme and as the energy source for the reaction. It is essential for DNA replication and repair of damaged DNA.</text>
</comment>
<comment type="catalytic activity">
    <reaction evidence="1">
        <text>NAD(+) + (deoxyribonucleotide)n-3'-hydroxyl + 5'-phospho-(deoxyribonucleotide)m = (deoxyribonucleotide)n+m + AMP + beta-nicotinamide D-nucleotide.</text>
        <dbReference type="EC" id="6.5.1.2"/>
    </reaction>
</comment>
<comment type="cofactor">
    <cofactor evidence="1">
        <name>Mg(2+)</name>
        <dbReference type="ChEBI" id="CHEBI:18420"/>
    </cofactor>
    <cofactor evidence="1">
        <name>Mn(2+)</name>
        <dbReference type="ChEBI" id="CHEBI:29035"/>
    </cofactor>
</comment>
<comment type="similarity">
    <text evidence="1">Belongs to the NAD-dependent DNA ligase family. LigA subfamily.</text>
</comment>
<organism>
    <name type="scientific">Xanthomonas oryzae pv. oryzae (strain MAFF 311018)</name>
    <dbReference type="NCBI Taxonomy" id="342109"/>
    <lineage>
        <taxon>Bacteria</taxon>
        <taxon>Pseudomonadati</taxon>
        <taxon>Pseudomonadota</taxon>
        <taxon>Gammaproteobacteria</taxon>
        <taxon>Lysobacterales</taxon>
        <taxon>Lysobacteraceae</taxon>
        <taxon>Xanthomonas</taxon>
    </lineage>
</organism>